<dbReference type="EC" id="2.7.1.50" evidence="1"/>
<dbReference type="EMBL" id="CP000609">
    <property type="protein sequence ID" value="ABO34762.1"/>
    <property type="molecule type" value="Genomic_DNA"/>
</dbReference>
<dbReference type="RefSeq" id="WP_011868217.1">
    <property type="nucleotide sequence ID" value="NC_009135.1"/>
</dbReference>
<dbReference type="SMR" id="A4FX33"/>
<dbReference type="STRING" id="402880.MmarC5_0447"/>
<dbReference type="GeneID" id="4928444"/>
<dbReference type="KEGG" id="mmq:MmarC5_0447"/>
<dbReference type="eggNOG" id="arCOG00019">
    <property type="taxonomic scope" value="Archaea"/>
</dbReference>
<dbReference type="HOGENOM" id="CLU_019943_0_0_2"/>
<dbReference type="OrthoDB" id="214286at2157"/>
<dbReference type="UniPathway" id="UPA00060">
    <property type="reaction ID" value="UER00139"/>
</dbReference>
<dbReference type="Proteomes" id="UP000000253">
    <property type="component" value="Chromosome"/>
</dbReference>
<dbReference type="GO" id="GO:0005524">
    <property type="term" value="F:ATP binding"/>
    <property type="evidence" value="ECO:0007669"/>
    <property type="project" value="UniProtKB-UniRule"/>
</dbReference>
<dbReference type="GO" id="GO:0004417">
    <property type="term" value="F:hydroxyethylthiazole kinase activity"/>
    <property type="evidence" value="ECO:0007669"/>
    <property type="project" value="UniProtKB-UniRule"/>
</dbReference>
<dbReference type="GO" id="GO:0000287">
    <property type="term" value="F:magnesium ion binding"/>
    <property type="evidence" value="ECO:0007669"/>
    <property type="project" value="UniProtKB-UniRule"/>
</dbReference>
<dbReference type="GO" id="GO:0009228">
    <property type="term" value="P:thiamine biosynthetic process"/>
    <property type="evidence" value="ECO:0007669"/>
    <property type="project" value="UniProtKB-KW"/>
</dbReference>
<dbReference type="GO" id="GO:0009229">
    <property type="term" value="P:thiamine diphosphate biosynthetic process"/>
    <property type="evidence" value="ECO:0007669"/>
    <property type="project" value="UniProtKB-UniRule"/>
</dbReference>
<dbReference type="CDD" id="cd01170">
    <property type="entry name" value="THZ_kinase"/>
    <property type="match status" value="1"/>
</dbReference>
<dbReference type="Gene3D" id="3.40.1190.20">
    <property type="match status" value="1"/>
</dbReference>
<dbReference type="HAMAP" id="MF_00228">
    <property type="entry name" value="Thz_kinase"/>
    <property type="match status" value="1"/>
</dbReference>
<dbReference type="InterPro" id="IPR000417">
    <property type="entry name" value="Hyethyz_kinase"/>
</dbReference>
<dbReference type="InterPro" id="IPR029056">
    <property type="entry name" value="Ribokinase-like"/>
</dbReference>
<dbReference type="NCBIfam" id="NF006830">
    <property type="entry name" value="PRK09355.1"/>
    <property type="match status" value="1"/>
</dbReference>
<dbReference type="NCBIfam" id="TIGR00694">
    <property type="entry name" value="thiM"/>
    <property type="match status" value="1"/>
</dbReference>
<dbReference type="Pfam" id="PF02110">
    <property type="entry name" value="HK"/>
    <property type="match status" value="1"/>
</dbReference>
<dbReference type="PIRSF" id="PIRSF000513">
    <property type="entry name" value="Thz_kinase"/>
    <property type="match status" value="1"/>
</dbReference>
<dbReference type="PRINTS" id="PR01099">
    <property type="entry name" value="HYETHTZKNASE"/>
</dbReference>
<dbReference type="SUPFAM" id="SSF53613">
    <property type="entry name" value="Ribokinase-like"/>
    <property type="match status" value="1"/>
</dbReference>
<protein>
    <recommendedName>
        <fullName evidence="1">Hydroxyethylthiazole kinase</fullName>
        <ecNumber evidence="1">2.7.1.50</ecNumber>
    </recommendedName>
    <alternativeName>
        <fullName evidence="1">4-methyl-5-beta-hydroxyethylthiazole kinase</fullName>
        <shortName evidence="1">TH kinase</shortName>
        <shortName evidence="1">Thz kinase</shortName>
    </alternativeName>
</protein>
<accession>A4FX33</accession>
<evidence type="ECO:0000255" key="1">
    <source>
        <dbReference type="HAMAP-Rule" id="MF_00228"/>
    </source>
</evidence>
<feature type="chain" id="PRO_1000021520" description="Hydroxyethylthiazole kinase">
    <location>
        <begin position="1"/>
        <end position="266"/>
    </location>
</feature>
<feature type="binding site" evidence="1">
    <location>
        <position position="43"/>
    </location>
    <ligand>
        <name>substrate</name>
    </ligand>
</feature>
<feature type="binding site" evidence="1">
    <location>
        <position position="119"/>
    </location>
    <ligand>
        <name>ATP</name>
        <dbReference type="ChEBI" id="CHEBI:30616"/>
    </ligand>
</feature>
<feature type="binding site" evidence="1">
    <location>
        <position position="166"/>
    </location>
    <ligand>
        <name>ATP</name>
        <dbReference type="ChEBI" id="CHEBI:30616"/>
    </ligand>
</feature>
<feature type="binding site" evidence="1">
    <location>
        <position position="193"/>
    </location>
    <ligand>
        <name>substrate</name>
    </ligand>
</feature>
<proteinExistence type="inferred from homology"/>
<reference key="1">
    <citation type="submission" date="2007-03" db="EMBL/GenBank/DDBJ databases">
        <title>Complete sequence of chromosome of Methanococcus maripaludis C5.</title>
        <authorList>
            <consortium name="US DOE Joint Genome Institute"/>
            <person name="Copeland A."/>
            <person name="Lucas S."/>
            <person name="Lapidus A."/>
            <person name="Barry K."/>
            <person name="Glavina del Rio T."/>
            <person name="Dalin E."/>
            <person name="Tice H."/>
            <person name="Pitluck S."/>
            <person name="Chertkov O."/>
            <person name="Brettin T."/>
            <person name="Bruce D."/>
            <person name="Han C."/>
            <person name="Detter J.C."/>
            <person name="Schmutz J."/>
            <person name="Larimer F."/>
            <person name="Land M."/>
            <person name="Hauser L."/>
            <person name="Kyrpides N."/>
            <person name="Mikhailova N."/>
            <person name="Sieprawska-Lupa M."/>
            <person name="Whitman W.B."/>
            <person name="Richardson P."/>
        </authorList>
    </citation>
    <scope>NUCLEOTIDE SEQUENCE [LARGE SCALE GENOMIC DNA]</scope>
    <source>
        <strain>C5 / ATCC BAA-1333</strain>
    </source>
</reference>
<sequence>MDFVAKNLTKLRETNPLVQNITNYVVMNSTANSLLALGASPVMAHAMDELEEMVSIASALVVNIGTLDEYWIPSMEKAAKIASDLKKPIILDPVGAGATKLRTKTALKILDFADISVLRGNFGEIAAVLGEHGKTRGVDSAAYDSNEAIELSKNAAKEFNTVSAVTGPVDYVSNGKEIYAISNGHPMLSKVTGTGCASTSIIGAFSAVDEPLKAAVSGLTVYGISAEMAFSEAPYPGTFQAKVYDWLYRIDEKLVFEKAKVNKFEI</sequence>
<organism>
    <name type="scientific">Methanococcus maripaludis (strain C5 / ATCC BAA-1333)</name>
    <dbReference type="NCBI Taxonomy" id="402880"/>
    <lineage>
        <taxon>Archaea</taxon>
        <taxon>Methanobacteriati</taxon>
        <taxon>Methanobacteriota</taxon>
        <taxon>Methanomada group</taxon>
        <taxon>Methanococci</taxon>
        <taxon>Methanococcales</taxon>
        <taxon>Methanococcaceae</taxon>
        <taxon>Methanococcus</taxon>
    </lineage>
</organism>
<comment type="function">
    <text evidence="1">Catalyzes the phosphorylation of the hydroxyl group of 4-methyl-5-beta-hydroxyethylthiazole (THZ).</text>
</comment>
<comment type="catalytic activity">
    <reaction evidence="1">
        <text>5-(2-hydroxyethyl)-4-methylthiazole + ATP = 4-methyl-5-(2-phosphooxyethyl)-thiazole + ADP + H(+)</text>
        <dbReference type="Rhea" id="RHEA:24212"/>
        <dbReference type="ChEBI" id="CHEBI:15378"/>
        <dbReference type="ChEBI" id="CHEBI:17957"/>
        <dbReference type="ChEBI" id="CHEBI:30616"/>
        <dbReference type="ChEBI" id="CHEBI:58296"/>
        <dbReference type="ChEBI" id="CHEBI:456216"/>
        <dbReference type="EC" id="2.7.1.50"/>
    </reaction>
</comment>
<comment type="cofactor">
    <cofactor evidence="1">
        <name>Mg(2+)</name>
        <dbReference type="ChEBI" id="CHEBI:18420"/>
    </cofactor>
</comment>
<comment type="pathway">
    <text evidence="1">Cofactor biosynthesis; thiamine diphosphate biosynthesis; 4-methyl-5-(2-phosphoethyl)-thiazole from 5-(2-hydroxyethyl)-4-methylthiazole: step 1/1.</text>
</comment>
<comment type="similarity">
    <text evidence="1">Belongs to the Thz kinase family.</text>
</comment>
<name>THIM_METM5</name>
<gene>
    <name evidence="1" type="primary">thiM</name>
    <name type="ordered locus">MmarC5_0447</name>
</gene>
<keyword id="KW-0067">ATP-binding</keyword>
<keyword id="KW-0418">Kinase</keyword>
<keyword id="KW-0460">Magnesium</keyword>
<keyword id="KW-0479">Metal-binding</keyword>
<keyword id="KW-0547">Nucleotide-binding</keyword>
<keyword id="KW-0784">Thiamine biosynthesis</keyword>
<keyword id="KW-0808">Transferase</keyword>